<evidence type="ECO:0000255" key="1">
    <source>
        <dbReference type="HAMAP-Rule" id="MF_01599"/>
    </source>
</evidence>
<organism>
    <name type="scientific">Shewanella woodyi (strain ATCC 51908 / MS32)</name>
    <dbReference type="NCBI Taxonomy" id="392500"/>
    <lineage>
        <taxon>Bacteria</taxon>
        <taxon>Pseudomonadati</taxon>
        <taxon>Pseudomonadota</taxon>
        <taxon>Gammaproteobacteria</taxon>
        <taxon>Alteromonadales</taxon>
        <taxon>Shewanellaceae</taxon>
        <taxon>Shewanella</taxon>
    </lineage>
</organism>
<keyword id="KW-0050">Antiport</keyword>
<keyword id="KW-0997">Cell inner membrane</keyword>
<keyword id="KW-1003">Cell membrane</keyword>
<keyword id="KW-0406">Ion transport</keyword>
<keyword id="KW-0472">Membrane</keyword>
<keyword id="KW-1185">Reference proteome</keyword>
<keyword id="KW-0915">Sodium</keyword>
<keyword id="KW-0739">Sodium transport</keyword>
<keyword id="KW-0812">Transmembrane</keyword>
<keyword id="KW-1133">Transmembrane helix</keyword>
<keyword id="KW-0813">Transport</keyword>
<feature type="chain" id="PRO_1000191546" description="Na(+)/H(+) antiporter NhaB">
    <location>
        <begin position="1"/>
        <end position="528"/>
    </location>
</feature>
<feature type="transmembrane region" description="Helical" evidence="1">
    <location>
        <begin position="29"/>
        <end position="49"/>
    </location>
</feature>
<feature type="transmembrane region" description="Helical" evidence="1">
    <location>
        <begin position="52"/>
        <end position="72"/>
    </location>
</feature>
<feature type="transmembrane region" description="Helical" evidence="1">
    <location>
        <begin position="95"/>
        <end position="115"/>
    </location>
</feature>
<feature type="transmembrane region" description="Helical" evidence="1">
    <location>
        <begin position="139"/>
        <end position="159"/>
    </location>
</feature>
<feature type="transmembrane region" description="Helical" evidence="1">
    <location>
        <begin position="203"/>
        <end position="223"/>
    </location>
</feature>
<feature type="transmembrane region" description="Helical" evidence="1">
    <location>
        <begin position="248"/>
        <end position="268"/>
    </location>
</feature>
<feature type="transmembrane region" description="Helical" evidence="1">
    <location>
        <begin position="304"/>
        <end position="324"/>
    </location>
</feature>
<feature type="transmembrane region" description="Helical" evidence="1">
    <location>
        <begin position="349"/>
        <end position="369"/>
    </location>
</feature>
<feature type="transmembrane region" description="Helical" evidence="1">
    <location>
        <begin position="390"/>
        <end position="410"/>
    </location>
</feature>
<feature type="transmembrane region" description="Helical" evidence="1">
    <location>
        <begin position="448"/>
        <end position="468"/>
    </location>
</feature>
<feature type="transmembrane region" description="Helical" evidence="1">
    <location>
        <begin position="476"/>
        <end position="496"/>
    </location>
</feature>
<sequence length="528" mass="57829">MPVTMSQAFIDNFLGNSPKWFKIAILSFLIINPIVFYINPFVAGWLLVIEFIFTLAMALKCYPLQPGGLLAIQAVAIGMTSPSQVFHEIEANLEVLLLLVFMVAGIYFMKQLLLFGFTKMITKVRSKIVVSLMFCTASAFLSAFLDALTVIAVIIAVAVGFYSIYHKVASGKTFNDDHDHTSDGQKQLCEEELEAFRGFLRNLLMHAGVGTALGGVCTMVGEPQNLIIAAQANWQFAEFAIRMSPVTVPVFFAGIFTCFLVEKFKIFGYGLQLPEAVHKILSDYEAHEDARRTNHDKMKLVVQAFIGIWLIVGLALHLASVGLIGLSVIILATAFNGVTNEHALGKAFEEALPFTALLAVFFAVVAVIIDQQLFAPVIQWALSYEGNTQLVIFYIANGLLSMVSDNVFVGTVYINEVKAALLSGQITRDQFDLLAVAINTGTNLPSVATPNGQAAFLFLLTSAIAPLIRLSYGRMVWMALPYTIVLSIVGVLAIELGGLEQMTQYFYDNQIITHHSIKDVVESAVSSH</sequence>
<dbReference type="EMBL" id="CP000961">
    <property type="protein sequence ID" value="ACA86966.1"/>
    <property type="molecule type" value="Genomic_DNA"/>
</dbReference>
<dbReference type="RefSeq" id="WP_012325306.1">
    <property type="nucleotide sequence ID" value="NC_010506.1"/>
</dbReference>
<dbReference type="SMR" id="B1KIB5"/>
<dbReference type="STRING" id="392500.Swoo_2690"/>
<dbReference type="KEGG" id="swd:Swoo_2690"/>
<dbReference type="eggNOG" id="COG3067">
    <property type="taxonomic scope" value="Bacteria"/>
</dbReference>
<dbReference type="HOGENOM" id="CLU_041110_0_0_6"/>
<dbReference type="Proteomes" id="UP000002168">
    <property type="component" value="Chromosome"/>
</dbReference>
<dbReference type="GO" id="GO:0005886">
    <property type="term" value="C:plasma membrane"/>
    <property type="evidence" value="ECO:0007669"/>
    <property type="project" value="UniProtKB-SubCell"/>
</dbReference>
<dbReference type="GO" id="GO:0015385">
    <property type="term" value="F:sodium:proton antiporter activity"/>
    <property type="evidence" value="ECO:0007669"/>
    <property type="project" value="InterPro"/>
</dbReference>
<dbReference type="HAMAP" id="MF_01599">
    <property type="entry name" value="NhaB"/>
    <property type="match status" value="1"/>
</dbReference>
<dbReference type="InterPro" id="IPR004671">
    <property type="entry name" value="Na+/H+_antiporter_NhaB"/>
</dbReference>
<dbReference type="NCBIfam" id="TIGR00774">
    <property type="entry name" value="NhaB"/>
    <property type="match status" value="1"/>
</dbReference>
<dbReference type="NCBIfam" id="NF007093">
    <property type="entry name" value="PRK09547.1"/>
    <property type="match status" value="1"/>
</dbReference>
<dbReference type="PANTHER" id="PTHR43302:SF1">
    <property type="entry name" value="NA(+)_H(+) ANTIPORTER NHAB"/>
    <property type="match status" value="1"/>
</dbReference>
<dbReference type="PANTHER" id="PTHR43302">
    <property type="entry name" value="TRANSPORTER ARSB-RELATED"/>
    <property type="match status" value="1"/>
</dbReference>
<dbReference type="Pfam" id="PF06450">
    <property type="entry name" value="NhaB"/>
    <property type="match status" value="1"/>
</dbReference>
<comment type="function">
    <text evidence="1">Na(+)/H(+) antiporter that extrudes sodium in exchange for external protons.</text>
</comment>
<comment type="catalytic activity">
    <reaction evidence="1">
        <text>2 Na(+)(in) + 3 H(+)(out) = 2 Na(+)(out) + 3 H(+)(in)</text>
        <dbReference type="Rhea" id="RHEA:29247"/>
        <dbReference type="ChEBI" id="CHEBI:15378"/>
        <dbReference type="ChEBI" id="CHEBI:29101"/>
    </reaction>
    <physiologicalReaction direction="left-to-right" evidence="1">
        <dbReference type="Rhea" id="RHEA:29248"/>
    </physiologicalReaction>
</comment>
<comment type="subcellular location">
    <subcellularLocation>
        <location evidence="1">Cell inner membrane</location>
        <topology evidence="1">Multi-pass membrane protein</topology>
    </subcellularLocation>
</comment>
<comment type="similarity">
    <text evidence="1">Belongs to the NhaB Na(+)/H(+) (TC 2.A.34) antiporter family.</text>
</comment>
<name>NHAB_SHEWM</name>
<reference key="1">
    <citation type="submission" date="2008-02" db="EMBL/GenBank/DDBJ databases">
        <title>Complete sequence of Shewanella woodyi ATCC 51908.</title>
        <authorList>
            <consortium name="US DOE Joint Genome Institute"/>
            <person name="Copeland A."/>
            <person name="Lucas S."/>
            <person name="Lapidus A."/>
            <person name="Glavina del Rio T."/>
            <person name="Dalin E."/>
            <person name="Tice H."/>
            <person name="Bruce D."/>
            <person name="Goodwin L."/>
            <person name="Pitluck S."/>
            <person name="Sims D."/>
            <person name="Brettin T."/>
            <person name="Detter J.C."/>
            <person name="Han C."/>
            <person name="Kuske C.R."/>
            <person name="Schmutz J."/>
            <person name="Larimer F."/>
            <person name="Land M."/>
            <person name="Hauser L."/>
            <person name="Kyrpides N."/>
            <person name="Lykidis A."/>
            <person name="Zhao J.-S."/>
            <person name="Richardson P."/>
        </authorList>
    </citation>
    <scope>NUCLEOTIDE SEQUENCE [LARGE SCALE GENOMIC DNA]</scope>
    <source>
        <strain>ATCC 51908 / MS32</strain>
    </source>
</reference>
<gene>
    <name evidence="1" type="primary">nhaB</name>
    <name type="ordered locus">Swoo_2690</name>
</gene>
<protein>
    <recommendedName>
        <fullName evidence="1">Na(+)/H(+) antiporter NhaB</fullName>
    </recommendedName>
    <alternativeName>
        <fullName evidence="1">Sodium/proton antiporter NhaB</fullName>
    </alternativeName>
</protein>
<proteinExistence type="inferred from homology"/>
<accession>B1KIB5</accession>